<feature type="chain" id="PRO_1000090641" description="Phospho-N-acetylmuramoyl-pentapeptide-transferase">
    <location>
        <begin position="1"/>
        <end position="320"/>
    </location>
</feature>
<feature type="transmembrane region" description="Helical" evidence="1">
    <location>
        <begin position="5"/>
        <end position="25"/>
    </location>
</feature>
<feature type="transmembrane region" description="Helical" evidence="1">
    <location>
        <begin position="51"/>
        <end position="71"/>
    </location>
</feature>
<feature type="transmembrane region" description="Helical" evidence="1">
    <location>
        <begin position="76"/>
        <end position="96"/>
    </location>
</feature>
<feature type="transmembrane region" description="Helical" evidence="1">
    <location>
        <begin position="124"/>
        <end position="144"/>
    </location>
</feature>
<feature type="transmembrane region" description="Helical" evidence="1">
    <location>
        <begin position="145"/>
        <end position="165"/>
    </location>
</feature>
<feature type="transmembrane region" description="Helical" evidence="1">
    <location>
        <begin position="176"/>
        <end position="196"/>
    </location>
</feature>
<feature type="transmembrane region" description="Helical" evidence="1">
    <location>
        <begin position="198"/>
        <end position="218"/>
    </location>
</feature>
<feature type="transmembrane region" description="Helical" evidence="1">
    <location>
        <begin position="233"/>
        <end position="255"/>
    </location>
</feature>
<feature type="transmembrane region" description="Helical" evidence="1">
    <location>
        <begin position="298"/>
        <end position="318"/>
    </location>
</feature>
<name>MRAY_LEUCK</name>
<accession>B1MXV8</accession>
<reference key="1">
    <citation type="journal article" date="2008" name="J. Bacteriol.">
        <title>Complete genome sequence of Leuconostoc citreum KM20.</title>
        <authorList>
            <person name="Kim J.F."/>
            <person name="Jeong H."/>
            <person name="Lee J.-S."/>
            <person name="Choi S.-H."/>
            <person name="Ha M."/>
            <person name="Hur C.-G."/>
            <person name="Kim J.-S."/>
            <person name="Lee S."/>
            <person name="Park H.-S."/>
            <person name="Park Y.-H."/>
            <person name="Oh T.K."/>
        </authorList>
    </citation>
    <scope>NUCLEOTIDE SEQUENCE [LARGE SCALE GENOMIC DNA]</scope>
    <source>
        <strain>KM20</strain>
    </source>
</reference>
<sequence length="320" mass="35192">MSDNLWALARAFIITVVFMPFLIKFLKQSKEQAVIRKLGPDHQSKAGTPSMGGLLFVLAAAISAFIGGAAYHGMSGVVAMIIPVFALVAYAIIGGIDDALKLINHADDGFAFKPKLLAQTLSAVVIMLIMWLLGVPFTLYIPMIGTINLGLFYFVFLWFWLVGWSNATNLTDGLDGLLAGNSVVVYAAYTVIAMHMHNHIIVLFNFSIIGGLLGFLIFNRPKAKIFMGDTGSLALGAGLAIESILLGVPFSLIWFGLIFVIETLSVIIQTVGYHFWHKRIFPMAPIHHSFEKFGWSEWQIDLLFWIVSSILAVAGIFYMN</sequence>
<protein>
    <recommendedName>
        <fullName evidence="1">Phospho-N-acetylmuramoyl-pentapeptide-transferase</fullName>
        <ecNumber evidence="1">2.7.8.13</ecNumber>
    </recommendedName>
    <alternativeName>
        <fullName evidence="1">UDP-MurNAc-pentapeptide phosphotransferase</fullName>
    </alternativeName>
</protein>
<gene>
    <name evidence="1" type="primary">mraY</name>
    <name type="ordered locus">LCK_00527</name>
</gene>
<comment type="function">
    <text evidence="1">Catalyzes the initial step of the lipid cycle reactions in the biosynthesis of the cell wall peptidoglycan: transfers peptidoglycan precursor phospho-MurNAc-pentapeptide from UDP-MurNAc-pentapeptide onto the lipid carrier undecaprenyl phosphate, yielding undecaprenyl-pyrophosphoryl-MurNAc-pentapeptide, known as lipid I.</text>
</comment>
<comment type="catalytic activity">
    <reaction evidence="1">
        <text>UDP-N-acetyl-alpha-D-muramoyl-L-alanyl-gamma-D-glutamyl-L-lysyl-D-alanyl-D-alanine + di-trans,octa-cis-undecaprenyl phosphate = Mur2Ac(oyl-L-Ala-gamma-D-Glu-L-Lys-D-Ala-D-Ala)-di-trans,octa-cis-undecaprenyl diphosphate + UMP</text>
        <dbReference type="Rhea" id="RHEA:21920"/>
        <dbReference type="ChEBI" id="CHEBI:57865"/>
        <dbReference type="ChEBI" id="CHEBI:60032"/>
        <dbReference type="ChEBI" id="CHEBI:60392"/>
        <dbReference type="ChEBI" id="CHEBI:70758"/>
        <dbReference type="EC" id="2.7.8.13"/>
    </reaction>
</comment>
<comment type="cofactor">
    <cofactor evidence="1">
        <name>Mg(2+)</name>
        <dbReference type="ChEBI" id="CHEBI:18420"/>
    </cofactor>
</comment>
<comment type="pathway">
    <text evidence="1">Cell wall biogenesis; peptidoglycan biosynthesis.</text>
</comment>
<comment type="subcellular location">
    <subcellularLocation>
        <location evidence="1">Cell membrane</location>
        <topology evidence="1">Multi-pass membrane protein</topology>
    </subcellularLocation>
</comment>
<comment type="similarity">
    <text evidence="1">Belongs to the glycosyltransferase 4 family. MraY subfamily.</text>
</comment>
<dbReference type="EC" id="2.7.8.13" evidence="1"/>
<dbReference type="EMBL" id="DQ489736">
    <property type="protein sequence ID" value="ACA82360.1"/>
    <property type="molecule type" value="Genomic_DNA"/>
</dbReference>
<dbReference type="RefSeq" id="WP_004900482.1">
    <property type="nucleotide sequence ID" value="NC_010471.1"/>
</dbReference>
<dbReference type="SMR" id="B1MXV8"/>
<dbReference type="STRING" id="349519.LCK_00527"/>
<dbReference type="GeneID" id="61102542"/>
<dbReference type="KEGG" id="lci:LCK_00527"/>
<dbReference type="eggNOG" id="COG0472">
    <property type="taxonomic scope" value="Bacteria"/>
</dbReference>
<dbReference type="HOGENOM" id="CLU_023982_0_1_9"/>
<dbReference type="OrthoDB" id="9805475at2"/>
<dbReference type="UniPathway" id="UPA00219"/>
<dbReference type="Proteomes" id="UP000002166">
    <property type="component" value="Chromosome"/>
</dbReference>
<dbReference type="GO" id="GO:0005886">
    <property type="term" value="C:plasma membrane"/>
    <property type="evidence" value="ECO:0007669"/>
    <property type="project" value="UniProtKB-SubCell"/>
</dbReference>
<dbReference type="GO" id="GO:0046872">
    <property type="term" value="F:metal ion binding"/>
    <property type="evidence" value="ECO:0007669"/>
    <property type="project" value="UniProtKB-KW"/>
</dbReference>
<dbReference type="GO" id="GO:0008963">
    <property type="term" value="F:phospho-N-acetylmuramoyl-pentapeptide-transferase activity"/>
    <property type="evidence" value="ECO:0007669"/>
    <property type="project" value="UniProtKB-UniRule"/>
</dbReference>
<dbReference type="GO" id="GO:0051301">
    <property type="term" value="P:cell division"/>
    <property type="evidence" value="ECO:0007669"/>
    <property type="project" value="UniProtKB-KW"/>
</dbReference>
<dbReference type="GO" id="GO:0071555">
    <property type="term" value="P:cell wall organization"/>
    <property type="evidence" value="ECO:0007669"/>
    <property type="project" value="UniProtKB-KW"/>
</dbReference>
<dbReference type="GO" id="GO:0009252">
    <property type="term" value="P:peptidoglycan biosynthetic process"/>
    <property type="evidence" value="ECO:0007669"/>
    <property type="project" value="UniProtKB-UniRule"/>
</dbReference>
<dbReference type="GO" id="GO:0008360">
    <property type="term" value="P:regulation of cell shape"/>
    <property type="evidence" value="ECO:0007669"/>
    <property type="project" value="UniProtKB-KW"/>
</dbReference>
<dbReference type="CDD" id="cd06852">
    <property type="entry name" value="GT_MraY"/>
    <property type="match status" value="1"/>
</dbReference>
<dbReference type="HAMAP" id="MF_00038">
    <property type="entry name" value="MraY"/>
    <property type="match status" value="1"/>
</dbReference>
<dbReference type="InterPro" id="IPR000715">
    <property type="entry name" value="Glycosyl_transferase_4"/>
</dbReference>
<dbReference type="InterPro" id="IPR003524">
    <property type="entry name" value="PNAcMuramoyl-5peptid_Trfase"/>
</dbReference>
<dbReference type="InterPro" id="IPR018480">
    <property type="entry name" value="PNAcMuramoyl-5peptid_Trfase_CS"/>
</dbReference>
<dbReference type="NCBIfam" id="TIGR00445">
    <property type="entry name" value="mraY"/>
    <property type="match status" value="1"/>
</dbReference>
<dbReference type="PANTHER" id="PTHR22926">
    <property type="entry name" value="PHOSPHO-N-ACETYLMURAMOYL-PENTAPEPTIDE-TRANSFERASE"/>
    <property type="match status" value="1"/>
</dbReference>
<dbReference type="PANTHER" id="PTHR22926:SF5">
    <property type="entry name" value="PHOSPHO-N-ACETYLMURAMOYL-PENTAPEPTIDE-TRANSFERASE HOMOLOG"/>
    <property type="match status" value="1"/>
</dbReference>
<dbReference type="Pfam" id="PF00953">
    <property type="entry name" value="Glycos_transf_4"/>
    <property type="match status" value="1"/>
</dbReference>
<dbReference type="Pfam" id="PF10555">
    <property type="entry name" value="MraY_sig1"/>
    <property type="match status" value="1"/>
</dbReference>
<dbReference type="PROSITE" id="PS01347">
    <property type="entry name" value="MRAY_1"/>
    <property type="match status" value="1"/>
</dbReference>
<dbReference type="PROSITE" id="PS01348">
    <property type="entry name" value="MRAY_2"/>
    <property type="match status" value="1"/>
</dbReference>
<proteinExistence type="inferred from homology"/>
<keyword id="KW-0131">Cell cycle</keyword>
<keyword id="KW-0132">Cell division</keyword>
<keyword id="KW-1003">Cell membrane</keyword>
<keyword id="KW-0133">Cell shape</keyword>
<keyword id="KW-0961">Cell wall biogenesis/degradation</keyword>
<keyword id="KW-0460">Magnesium</keyword>
<keyword id="KW-0472">Membrane</keyword>
<keyword id="KW-0479">Metal-binding</keyword>
<keyword id="KW-0573">Peptidoglycan synthesis</keyword>
<keyword id="KW-1185">Reference proteome</keyword>
<keyword id="KW-0808">Transferase</keyword>
<keyword id="KW-0812">Transmembrane</keyword>
<keyword id="KW-1133">Transmembrane helix</keyword>
<organism>
    <name type="scientific">Leuconostoc citreum (strain KM20)</name>
    <dbReference type="NCBI Taxonomy" id="349519"/>
    <lineage>
        <taxon>Bacteria</taxon>
        <taxon>Bacillati</taxon>
        <taxon>Bacillota</taxon>
        <taxon>Bacilli</taxon>
        <taxon>Lactobacillales</taxon>
        <taxon>Lactobacillaceae</taxon>
        <taxon>Leuconostoc</taxon>
    </lineage>
</organism>
<evidence type="ECO:0000255" key="1">
    <source>
        <dbReference type="HAMAP-Rule" id="MF_00038"/>
    </source>
</evidence>